<dbReference type="EMBL" id="CP000910">
    <property type="protein sequence ID" value="ABY23183.1"/>
    <property type="molecule type" value="Genomic_DNA"/>
</dbReference>
<dbReference type="RefSeq" id="WP_012244864.1">
    <property type="nucleotide sequence ID" value="NC_010168.1"/>
</dbReference>
<dbReference type="SMR" id="A9WNC7"/>
<dbReference type="STRING" id="288705.RSal33209_1447"/>
<dbReference type="KEGG" id="rsa:RSal33209_1447"/>
<dbReference type="eggNOG" id="COG0224">
    <property type="taxonomic scope" value="Bacteria"/>
</dbReference>
<dbReference type="HOGENOM" id="CLU_050669_0_0_11"/>
<dbReference type="Proteomes" id="UP000002007">
    <property type="component" value="Chromosome"/>
</dbReference>
<dbReference type="GO" id="GO:0005886">
    <property type="term" value="C:plasma membrane"/>
    <property type="evidence" value="ECO:0007669"/>
    <property type="project" value="UniProtKB-SubCell"/>
</dbReference>
<dbReference type="GO" id="GO:0045259">
    <property type="term" value="C:proton-transporting ATP synthase complex"/>
    <property type="evidence" value="ECO:0007669"/>
    <property type="project" value="UniProtKB-KW"/>
</dbReference>
<dbReference type="GO" id="GO:0005524">
    <property type="term" value="F:ATP binding"/>
    <property type="evidence" value="ECO:0007669"/>
    <property type="project" value="UniProtKB-UniRule"/>
</dbReference>
<dbReference type="GO" id="GO:0046933">
    <property type="term" value="F:proton-transporting ATP synthase activity, rotational mechanism"/>
    <property type="evidence" value="ECO:0007669"/>
    <property type="project" value="UniProtKB-UniRule"/>
</dbReference>
<dbReference type="GO" id="GO:0042777">
    <property type="term" value="P:proton motive force-driven plasma membrane ATP synthesis"/>
    <property type="evidence" value="ECO:0007669"/>
    <property type="project" value="UniProtKB-UniRule"/>
</dbReference>
<dbReference type="CDD" id="cd12151">
    <property type="entry name" value="F1-ATPase_gamma"/>
    <property type="match status" value="1"/>
</dbReference>
<dbReference type="Gene3D" id="3.40.1380.10">
    <property type="match status" value="1"/>
</dbReference>
<dbReference type="Gene3D" id="1.10.287.80">
    <property type="entry name" value="ATP synthase, gamma subunit, helix hairpin domain"/>
    <property type="match status" value="2"/>
</dbReference>
<dbReference type="HAMAP" id="MF_00815">
    <property type="entry name" value="ATP_synth_gamma_bact"/>
    <property type="match status" value="1"/>
</dbReference>
<dbReference type="InterPro" id="IPR035968">
    <property type="entry name" value="ATP_synth_F1_ATPase_gsu"/>
</dbReference>
<dbReference type="InterPro" id="IPR000131">
    <property type="entry name" value="ATP_synth_F1_gsu"/>
</dbReference>
<dbReference type="InterPro" id="IPR023632">
    <property type="entry name" value="ATP_synth_F1_gsu_CS"/>
</dbReference>
<dbReference type="NCBIfam" id="TIGR01146">
    <property type="entry name" value="ATPsyn_F1gamma"/>
    <property type="match status" value="1"/>
</dbReference>
<dbReference type="NCBIfam" id="NF004145">
    <property type="entry name" value="PRK05621.1-2"/>
    <property type="match status" value="1"/>
</dbReference>
<dbReference type="PANTHER" id="PTHR11693">
    <property type="entry name" value="ATP SYNTHASE GAMMA CHAIN"/>
    <property type="match status" value="1"/>
</dbReference>
<dbReference type="PANTHER" id="PTHR11693:SF22">
    <property type="entry name" value="ATP SYNTHASE SUBUNIT GAMMA, MITOCHONDRIAL"/>
    <property type="match status" value="1"/>
</dbReference>
<dbReference type="Pfam" id="PF00231">
    <property type="entry name" value="ATP-synt"/>
    <property type="match status" value="1"/>
</dbReference>
<dbReference type="PRINTS" id="PR00126">
    <property type="entry name" value="ATPASEGAMMA"/>
</dbReference>
<dbReference type="SUPFAM" id="SSF52943">
    <property type="entry name" value="ATP synthase (F1-ATPase), gamma subunit"/>
    <property type="match status" value="1"/>
</dbReference>
<dbReference type="PROSITE" id="PS00153">
    <property type="entry name" value="ATPASE_GAMMA"/>
    <property type="match status" value="1"/>
</dbReference>
<gene>
    <name evidence="1" type="primary">atpG</name>
    <name type="ordered locus">RSal33209_1447</name>
</gene>
<feature type="chain" id="PRO_1000083801" description="ATP synthase gamma chain">
    <location>
        <begin position="1"/>
        <end position="297"/>
    </location>
</feature>
<organism>
    <name type="scientific">Renibacterium salmoninarum (strain ATCC 33209 / DSM 20767 / JCM 11484 / NBRC 15589 / NCIMB 2235)</name>
    <dbReference type="NCBI Taxonomy" id="288705"/>
    <lineage>
        <taxon>Bacteria</taxon>
        <taxon>Bacillati</taxon>
        <taxon>Actinomycetota</taxon>
        <taxon>Actinomycetes</taxon>
        <taxon>Micrococcales</taxon>
        <taxon>Micrococcaceae</taxon>
        <taxon>Renibacterium</taxon>
    </lineage>
</organism>
<name>ATPG_RENSM</name>
<protein>
    <recommendedName>
        <fullName evidence="1">ATP synthase gamma chain</fullName>
    </recommendedName>
    <alternativeName>
        <fullName evidence="1">ATP synthase F1 sector gamma subunit</fullName>
    </alternativeName>
    <alternativeName>
        <fullName evidence="1">F-ATPase gamma subunit</fullName>
    </alternativeName>
</protein>
<proteinExistence type="inferred from homology"/>
<keyword id="KW-0066">ATP synthesis</keyword>
<keyword id="KW-1003">Cell membrane</keyword>
<keyword id="KW-0139">CF(1)</keyword>
<keyword id="KW-0375">Hydrogen ion transport</keyword>
<keyword id="KW-0406">Ion transport</keyword>
<keyword id="KW-0472">Membrane</keyword>
<keyword id="KW-1185">Reference proteome</keyword>
<keyword id="KW-0813">Transport</keyword>
<accession>A9WNC7</accession>
<comment type="function">
    <text evidence="1">Produces ATP from ADP in the presence of a proton gradient across the membrane. The gamma chain is believed to be important in regulating ATPase activity and the flow of protons through the CF(0) complex.</text>
</comment>
<comment type="subunit">
    <text evidence="1">F-type ATPases have 2 components, CF(1) - the catalytic core - and CF(0) - the membrane proton channel. CF(1) has five subunits: alpha(3), beta(3), gamma(1), delta(1), epsilon(1). CF(0) has three main subunits: a, b and c.</text>
</comment>
<comment type="subcellular location">
    <subcellularLocation>
        <location evidence="1">Cell membrane</location>
        <topology evidence="1">Peripheral membrane protein</topology>
    </subcellularLocation>
</comment>
<comment type="similarity">
    <text evidence="1">Belongs to the ATPase gamma chain family.</text>
</comment>
<sequence length="297" mass="33014">MGAQLRVYRQRIKSTQSMGKLFKAMELIATSRISKARSRVQASLPYANAITRAVSVVASQSEIHHPLTTEPEQILRAAVLVLTSNRGLAGSYSASVLKQAEQLNTLLQADGKEVKTYLVGNKAQAYFQFRNRSFTKAWVNPTDAPEFATAQEISKTLLEDFAEEFEKDGVDEIHVVYTRFKSMVVQEPTVIRLLPLEVSEEEVSESSDLLPLYEYEPEPEAVLDALLPRYIEARIFNVMLQAAASELAARQRAMKSASDNARDLVKKFTRLANTARQAEITQELSEIVAGADSLNAS</sequence>
<evidence type="ECO:0000255" key="1">
    <source>
        <dbReference type="HAMAP-Rule" id="MF_00815"/>
    </source>
</evidence>
<reference key="1">
    <citation type="journal article" date="2008" name="J. Bacteriol.">
        <title>Genome sequence of the fish pathogen Renibacterium salmoninarum suggests reductive evolution away from an environmental Arthrobacter ancestor.</title>
        <authorList>
            <person name="Wiens G.D."/>
            <person name="Rockey D.D."/>
            <person name="Wu Z."/>
            <person name="Chang J."/>
            <person name="Levy R."/>
            <person name="Crane S."/>
            <person name="Chen D.S."/>
            <person name="Capri G.R."/>
            <person name="Burnett J.R."/>
            <person name="Sudheesh P.S."/>
            <person name="Schipma M.J."/>
            <person name="Burd H."/>
            <person name="Bhattacharyya A."/>
            <person name="Rhodes L.D."/>
            <person name="Kaul R."/>
            <person name="Strom M.S."/>
        </authorList>
    </citation>
    <scope>NUCLEOTIDE SEQUENCE [LARGE SCALE GENOMIC DNA]</scope>
    <source>
        <strain>ATCC 33209 / DSM 20767 / JCM 11484 / NBRC 15589 / NCIMB 2235</strain>
    </source>
</reference>